<protein>
    <recommendedName>
        <fullName>Ryncolin-1</fullName>
    </recommendedName>
</protein>
<reference key="1">
    <citation type="journal article" date="2010" name="J. Proteome Res.">
        <title>Identification of a novel family of snake venom proteins Veficolins from Cerberus rynchops using a venom gland transcriptomics and proteomics approach.</title>
        <authorList>
            <person name="Ompraba G."/>
            <person name="Chapeaurouge A."/>
            <person name="Doley R."/>
            <person name="Devi K.R."/>
            <person name="Padmanaban P."/>
            <person name="Venkatraman C."/>
            <person name="Velmurugan D."/>
            <person name="Lin Q."/>
            <person name="Kini R.M."/>
        </authorList>
    </citation>
    <scope>NUCLEOTIDE SEQUENCE [MRNA]</scope>
    <scope>IDENTIFICATION BY MASS SPECTROMETRY</scope>
    <scope>HYDROXYLATION</scope>
    <source>
        <tissue>Venom</tissue>
        <tissue>Venom gland</tissue>
    </source>
</reference>
<accession>D8VNS7</accession>
<name>FCNV1_CERRY</name>
<feature type="signal peptide" evidence="2">
    <location>
        <begin position="1"/>
        <end position="19"/>
    </location>
</feature>
<feature type="chain" id="PRO_0000414918" description="Ryncolin-1">
    <location>
        <begin position="20"/>
        <end position="345"/>
    </location>
</feature>
<feature type="domain" description="Collagen-like">
    <location>
        <begin position="57"/>
        <end position="114"/>
    </location>
</feature>
<feature type="domain" description="Fibrinogen C-terminal" evidence="3">
    <location>
        <begin position="121"/>
        <end position="339"/>
    </location>
</feature>
<feature type="region of interest" description="Disordered" evidence="4">
    <location>
        <begin position="48"/>
        <end position="118"/>
    </location>
</feature>
<feature type="compositionally biased region" description="Basic and acidic residues" evidence="4">
    <location>
        <begin position="86"/>
        <end position="116"/>
    </location>
</feature>
<feature type="disulfide bond" evidence="3">
    <location>
        <begin position="130"/>
        <end position="158"/>
    </location>
</feature>
<feature type="disulfide bond" evidence="3">
    <location>
        <begin position="282"/>
        <end position="295"/>
    </location>
</feature>
<sequence length="345" mass="38464">MKPWAAFHLIFLVASSLEGEVSNYGTGGTQDTEPTCRTEHQCTRDKIILQSQPGIPGIPGVPGTNGSEGLKGDPGPQGPPGIRGPDGIRGEAGPKGDKGDQGDKGDKGDKGDKGEDCNLDGCLPTEVRNCQDLLEHGEILNGWYTIYPTKENPMVVFCDMETDGGGWLVFQRRQDGSVDFYLDWESYKKGFGKQESEFWLGNDKIHLLTSSGTQQLRIDLEDFEGSRTFAKYSSFSIGDENEKYRLIVGSYLDGSMNDSFRIHNGHSFSTKDRDNDTNKGNCAMMYKGAWWYFHCHHANLNGLYYKGKHANYADGINWRSGKGYYYSYKYADMKIRPQQSETTVS</sequence>
<comment type="function">
    <text evidence="1">Initiates complement activation and/or interferes in platelet aggregation and/or blood coagulation.</text>
</comment>
<comment type="subcellular location">
    <subcellularLocation>
        <location>Secreted</location>
    </subcellularLocation>
</comment>
<comment type="tissue specificity">
    <text>Expressed by the venom duct.</text>
</comment>
<comment type="PTM">
    <text evidence="5">Hydroxylated, possibly at Pro-80.</text>
</comment>
<comment type="similarity">
    <text evidence="6">Belongs to the ficolin lectin family. Veficolin subfamily.</text>
</comment>
<proteinExistence type="evidence at protein level"/>
<dbReference type="EMBL" id="GU065323">
    <property type="protein sequence ID" value="ADJ51062.1"/>
    <property type="molecule type" value="mRNA"/>
</dbReference>
<dbReference type="SMR" id="D8VNS7"/>
<dbReference type="GO" id="GO:0005615">
    <property type="term" value="C:extracellular space"/>
    <property type="evidence" value="ECO:0007669"/>
    <property type="project" value="TreeGrafter"/>
</dbReference>
<dbReference type="GO" id="GO:0003823">
    <property type="term" value="F:antigen binding"/>
    <property type="evidence" value="ECO:0007669"/>
    <property type="project" value="TreeGrafter"/>
</dbReference>
<dbReference type="GO" id="GO:0097367">
    <property type="term" value="F:carbohydrate derivative binding"/>
    <property type="evidence" value="ECO:0007669"/>
    <property type="project" value="TreeGrafter"/>
</dbReference>
<dbReference type="GO" id="GO:0005102">
    <property type="term" value="F:signaling receptor binding"/>
    <property type="evidence" value="ECO:0007669"/>
    <property type="project" value="TreeGrafter"/>
</dbReference>
<dbReference type="GO" id="GO:0090729">
    <property type="term" value="F:toxin activity"/>
    <property type="evidence" value="ECO:0007669"/>
    <property type="project" value="UniProtKB-KW"/>
</dbReference>
<dbReference type="GO" id="GO:0001867">
    <property type="term" value="P:complement activation, lectin pathway"/>
    <property type="evidence" value="ECO:0007669"/>
    <property type="project" value="TreeGrafter"/>
</dbReference>
<dbReference type="CDD" id="cd00087">
    <property type="entry name" value="FReD"/>
    <property type="match status" value="1"/>
</dbReference>
<dbReference type="FunFam" id="3.90.215.10:FF:000001">
    <property type="entry name" value="Tenascin isoform 1"/>
    <property type="match status" value="1"/>
</dbReference>
<dbReference type="Gene3D" id="3.90.215.10">
    <property type="entry name" value="Gamma Fibrinogen, chain A, domain 1"/>
    <property type="match status" value="1"/>
</dbReference>
<dbReference type="InterPro" id="IPR008160">
    <property type="entry name" value="Collagen"/>
</dbReference>
<dbReference type="InterPro" id="IPR036056">
    <property type="entry name" value="Fibrinogen-like_C"/>
</dbReference>
<dbReference type="InterPro" id="IPR014716">
    <property type="entry name" value="Fibrinogen_a/b/g_C_1"/>
</dbReference>
<dbReference type="InterPro" id="IPR002181">
    <property type="entry name" value="Fibrinogen_a/b/g_C_dom"/>
</dbReference>
<dbReference type="InterPro" id="IPR050373">
    <property type="entry name" value="Fibrinogen_C-term_domain"/>
</dbReference>
<dbReference type="InterPro" id="IPR020837">
    <property type="entry name" value="Fibrinogen_CS"/>
</dbReference>
<dbReference type="NCBIfam" id="NF040941">
    <property type="entry name" value="GGGWT_bact"/>
    <property type="match status" value="1"/>
</dbReference>
<dbReference type="PANTHER" id="PTHR19143">
    <property type="entry name" value="FIBRINOGEN/TENASCIN/ANGIOPOEITIN"/>
    <property type="match status" value="1"/>
</dbReference>
<dbReference type="PANTHER" id="PTHR19143:SF415">
    <property type="entry name" value="FICOLIN-3"/>
    <property type="match status" value="1"/>
</dbReference>
<dbReference type="Pfam" id="PF01391">
    <property type="entry name" value="Collagen"/>
    <property type="match status" value="1"/>
</dbReference>
<dbReference type="Pfam" id="PF00147">
    <property type="entry name" value="Fibrinogen_C"/>
    <property type="match status" value="1"/>
</dbReference>
<dbReference type="SMART" id="SM00186">
    <property type="entry name" value="FBG"/>
    <property type="match status" value="1"/>
</dbReference>
<dbReference type="SUPFAM" id="SSF56496">
    <property type="entry name" value="Fibrinogen C-terminal domain-like"/>
    <property type="match status" value="1"/>
</dbReference>
<dbReference type="PROSITE" id="PS00514">
    <property type="entry name" value="FIBRINOGEN_C_1"/>
    <property type="match status" value="1"/>
</dbReference>
<dbReference type="PROSITE" id="PS51406">
    <property type="entry name" value="FIBRINOGEN_C_2"/>
    <property type="match status" value="1"/>
</dbReference>
<organism>
    <name type="scientific">Cerberus rynchops</name>
    <name type="common">Dog-faced water snake</name>
    <dbReference type="NCBI Taxonomy" id="46267"/>
    <lineage>
        <taxon>Eukaryota</taxon>
        <taxon>Metazoa</taxon>
        <taxon>Chordata</taxon>
        <taxon>Craniata</taxon>
        <taxon>Vertebrata</taxon>
        <taxon>Euteleostomi</taxon>
        <taxon>Lepidosauria</taxon>
        <taxon>Squamata</taxon>
        <taxon>Bifurcata</taxon>
        <taxon>Unidentata</taxon>
        <taxon>Episquamata</taxon>
        <taxon>Toxicofera</taxon>
        <taxon>Serpentes</taxon>
        <taxon>Colubroidea</taxon>
        <taxon>Homalopsidae</taxon>
        <taxon>Cerberus</taxon>
    </lineage>
</organism>
<evidence type="ECO:0000250" key="1"/>
<evidence type="ECO:0000255" key="2"/>
<evidence type="ECO:0000255" key="3">
    <source>
        <dbReference type="PROSITE-ProRule" id="PRU00739"/>
    </source>
</evidence>
<evidence type="ECO:0000256" key="4">
    <source>
        <dbReference type="SAM" id="MobiDB-lite"/>
    </source>
</evidence>
<evidence type="ECO:0000269" key="5">
    <source>
    </source>
</evidence>
<evidence type="ECO:0000305" key="6"/>
<keyword id="KW-1216">Complement system impairing toxin</keyword>
<keyword id="KW-1015">Disulfide bond</keyword>
<keyword id="KW-1199">Hemostasis impairing toxin</keyword>
<keyword id="KW-0379">Hydroxylation</keyword>
<keyword id="KW-0964">Secreted</keyword>
<keyword id="KW-0732">Signal</keyword>
<keyword id="KW-0800">Toxin</keyword>